<sequence length="298" mass="34463">MALDFWKSSHAQQWIFDKTEIWKQRAEDMKTYSEEEYSRLNIFWANFITAVATECAHSQANVGCKLRQQVIATAIVYFKRFYLRQSFRDMCPFLVASTALFLACKVEEHTTLSVSSFLKNTALVLPKRWGVAFETNSAKNGVLYDSEFILVEILDCCLVVHHATRPMFELLEDWKQHTLTSTNTPVKDFDQIEIQCQKVVNDTLRCDVGLMFAPHCIGLASISVGMELMGRGEELEDWLVEVDTDMDKLADCINQIYTMYQLWRSFDEKEEVKKLMAKLPKPNTPIPPPQQQQSSYHM</sequence>
<protein>
    <recommendedName>
        <fullName>Cyclin-C</fullName>
    </recommendedName>
</protein>
<feature type="chain" id="PRO_0000314263" description="Cyclin-C">
    <location>
        <begin position="1"/>
        <end position="298"/>
    </location>
</feature>
<feature type="domain" description="Cyclin N-terminal">
    <location>
        <begin position="46"/>
        <end position="162"/>
    </location>
</feature>
<feature type="region of interest" description="Disordered" evidence="2">
    <location>
        <begin position="278"/>
        <end position="298"/>
    </location>
</feature>
<gene>
    <name type="primary">cic-1</name>
    <name type="ORF">CBG15657</name>
</gene>
<name>CCNC_CAEBR</name>
<proteinExistence type="inferred from homology"/>
<organism>
    <name type="scientific">Caenorhabditis briggsae</name>
    <dbReference type="NCBI Taxonomy" id="6238"/>
    <lineage>
        <taxon>Eukaryota</taxon>
        <taxon>Metazoa</taxon>
        <taxon>Ecdysozoa</taxon>
        <taxon>Nematoda</taxon>
        <taxon>Chromadorea</taxon>
        <taxon>Rhabditida</taxon>
        <taxon>Rhabditina</taxon>
        <taxon>Rhabditomorpha</taxon>
        <taxon>Rhabditoidea</taxon>
        <taxon>Rhabditidae</taxon>
        <taxon>Peloderinae</taxon>
        <taxon>Caenorhabditis</taxon>
    </lineage>
</organism>
<accession>P0C654</accession>
<accession>A8XMG9</accession>
<comment type="function">
    <text evidence="1">Component of the Mediator complex, a coactivator involved in regulated gene transcription of nearly all RNA polymerase II-dependent genes. Mediator functions as a bridge to convey information from gene-specific regulatory proteins to the basal RNA polymerase II transcription machinery. Mediator is recruited to promoters by direct interactions with regulatory proteins and serves as a scaffold for the assembly of a functional preinitiation complex with RNA polymerase II and the general transcription factors. Binds to and activates cyclin-dependent kinase cdk-8 that phosphorylates the CTD (C-terminal domain) of the large subunit of RNA polymerase II (RNAp II), which may inhibit the formation of a transcription initiation complex (By similarity).</text>
</comment>
<comment type="subunit">
    <text evidence="1">Component of the Mediator complex.</text>
</comment>
<comment type="subcellular location">
    <subcellularLocation>
        <location evidence="1">Nucleus</location>
    </subcellularLocation>
</comment>
<comment type="similarity">
    <text evidence="3">Belongs to the cyclin family. Cyclin C subfamily.</text>
</comment>
<keyword id="KW-0010">Activator</keyword>
<keyword id="KW-0195">Cyclin</keyword>
<keyword id="KW-0217">Developmental protein</keyword>
<keyword id="KW-0539">Nucleus</keyword>
<keyword id="KW-1185">Reference proteome</keyword>
<keyword id="KW-0804">Transcription</keyword>
<keyword id="KW-0805">Transcription regulation</keyword>
<evidence type="ECO:0000250" key="1"/>
<evidence type="ECO:0000256" key="2">
    <source>
        <dbReference type="SAM" id="MobiDB-lite"/>
    </source>
</evidence>
<evidence type="ECO:0000305" key="3"/>
<reference key="1">
    <citation type="journal article" date="2003" name="PLoS Biol.">
        <title>The genome sequence of Caenorhabditis briggsae: a platform for comparative genomics.</title>
        <authorList>
            <person name="Stein L.D."/>
            <person name="Bao Z."/>
            <person name="Blasiar D."/>
            <person name="Blumenthal T."/>
            <person name="Brent M.R."/>
            <person name="Chen N."/>
            <person name="Chinwalla A."/>
            <person name="Clarke L."/>
            <person name="Clee C."/>
            <person name="Coghlan A."/>
            <person name="Coulson A."/>
            <person name="D'Eustachio P."/>
            <person name="Fitch D.H.A."/>
            <person name="Fulton L.A."/>
            <person name="Fulton R.E."/>
            <person name="Griffiths-Jones S."/>
            <person name="Harris T.W."/>
            <person name="Hillier L.W."/>
            <person name="Kamath R."/>
            <person name="Kuwabara P.E."/>
            <person name="Mardis E.R."/>
            <person name="Marra M.A."/>
            <person name="Miner T.L."/>
            <person name="Minx P."/>
            <person name="Mullikin J.C."/>
            <person name="Plumb R.W."/>
            <person name="Rogers J."/>
            <person name="Schein J.E."/>
            <person name="Sohrmann M."/>
            <person name="Spieth J."/>
            <person name="Stajich J.E."/>
            <person name="Wei C."/>
            <person name="Willey D."/>
            <person name="Wilson R.K."/>
            <person name="Durbin R.M."/>
            <person name="Waterston R.H."/>
        </authorList>
    </citation>
    <scope>NUCLEOTIDE SEQUENCE [LARGE SCALE GENOMIC DNA]</scope>
    <source>
        <strain>AF16</strain>
    </source>
</reference>
<dbReference type="EMBL" id="HE600979">
    <property type="protein sequence ID" value="CAP33845.2"/>
    <property type="molecule type" value="Genomic_DNA"/>
</dbReference>
<dbReference type="SMR" id="P0C654"/>
<dbReference type="FunCoup" id="P0C654">
    <property type="interactions" value="2990"/>
</dbReference>
<dbReference type="STRING" id="6238.P0C654"/>
<dbReference type="EnsemblMetazoa" id="CBG15657a.1">
    <property type="protein sequence ID" value="CBG15657a.1"/>
    <property type="gene ID" value="WBGene00035815"/>
</dbReference>
<dbReference type="WormBase" id="CBG15657a">
    <property type="protein sequence ID" value="CBP35555"/>
    <property type="gene ID" value="WBGene00035815"/>
    <property type="gene designation" value="Cbr-cic-1"/>
</dbReference>
<dbReference type="eggNOG" id="KOG0794">
    <property type="taxonomic scope" value="Eukaryota"/>
</dbReference>
<dbReference type="HOGENOM" id="CLU_034754_1_1_1"/>
<dbReference type="InParanoid" id="P0C654"/>
<dbReference type="OMA" id="CLLHPPH"/>
<dbReference type="Proteomes" id="UP000008549">
    <property type="component" value="Unassembled WGS sequence"/>
</dbReference>
<dbReference type="GO" id="GO:0016592">
    <property type="term" value="C:mediator complex"/>
    <property type="evidence" value="ECO:0000318"/>
    <property type="project" value="GO_Central"/>
</dbReference>
<dbReference type="GO" id="GO:0005634">
    <property type="term" value="C:nucleus"/>
    <property type="evidence" value="ECO:0000318"/>
    <property type="project" value="GO_Central"/>
</dbReference>
<dbReference type="GO" id="GO:0016538">
    <property type="term" value="F:cyclin-dependent protein serine/threonine kinase regulator activity"/>
    <property type="evidence" value="ECO:0000318"/>
    <property type="project" value="GO_Central"/>
</dbReference>
<dbReference type="GO" id="GO:0045944">
    <property type="term" value="P:positive regulation of transcription by RNA polymerase II"/>
    <property type="evidence" value="ECO:0000318"/>
    <property type="project" value="GO_Central"/>
</dbReference>
<dbReference type="CDD" id="cd20513">
    <property type="entry name" value="CYCLIN_CCNC_rpt1"/>
    <property type="match status" value="1"/>
</dbReference>
<dbReference type="Gene3D" id="1.10.472.10">
    <property type="entry name" value="Cyclin-like"/>
    <property type="match status" value="2"/>
</dbReference>
<dbReference type="InterPro" id="IPR013763">
    <property type="entry name" value="Cyclin-like_dom"/>
</dbReference>
<dbReference type="InterPro" id="IPR036915">
    <property type="entry name" value="Cyclin-like_sf"/>
</dbReference>
<dbReference type="InterPro" id="IPR043198">
    <property type="entry name" value="Cyclin/Ssn8"/>
</dbReference>
<dbReference type="InterPro" id="IPR006671">
    <property type="entry name" value="Cyclin_N"/>
</dbReference>
<dbReference type="PANTHER" id="PTHR10026">
    <property type="entry name" value="CYCLIN"/>
    <property type="match status" value="1"/>
</dbReference>
<dbReference type="Pfam" id="PF00134">
    <property type="entry name" value="Cyclin_N"/>
    <property type="match status" value="1"/>
</dbReference>
<dbReference type="PIRSF" id="PIRSF028758">
    <property type="entry name" value="Cyclin, C/H/G types"/>
    <property type="match status" value="1"/>
</dbReference>
<dbReference type="SMART" id="SM00385">
    <property type="entry name" value="CYCLIN"/>
    <property type="match status" value="1"/>
</dbReference>
<dbReference type="SUPFAM" id="SSF47954">
    <property type="entry name" value="Cyclin-like"/>
    <property type="match status" value="2"/>
</dbReference>